<organism>
    <name type="scientific">Chlamydia trachomatis serovar D (strain ATCC VR-885 / DSM 19411 / UW-3/Cx)</name>
    <dbReference type="NCBI Taxonomy" id="272561"/>
    <lineage>
        <taxon>Bacteria</taxon>
        <taxon>Pseudomonadati</taxon>
        <taxon>Chlamydiota</taxon>
        <taxon>Chlamydiia</taxon>
        <taxon>Chlamydiales</taxon>
        <taxon>Chlamydiaceae</taxon>
        <taxon>Chlamydia/Chlamydophila group</taxon>
        <taxon>Chlamydia</taxon>
    </lineage>
</organism>
<sequence>MQHTVDIQAIESKLNFTFSHPRLLITALTHPSYRNEFPSAEEDSERLEFLGDAVLGLVVTEHLFLLFPALNEGLLSTTRAALVNAEACFEYTQKLSLGEHLLIGRGEKMQSHRGKISAYANLLEAILGAVYLDGGLSPARQIIVPLLPDKESILPLMLVNPKNRLQQFTQQTLKVLPSYKALPWKSEDGSPGYHVQVFVNGDLWGEGFAGSKKEAEKLAAKQALSTHDNKN</sequence>
<reference key="1">
    <citation type="journal article" date="1998" name="Science">
        <title>Genome sequence of an obligate intracellular pathogen of humans: Chlamydia trachomatis.</title>
        <authorList>
            <person name="Stephens R.S."/>
            <person name="Kalman S."/>
            <person name="Lammel C.J."/>
            <person name="Fan J."/>
            <person name="Marathe R."/>
            <person name="Aravind L."/>
            <person name="Mitchell W.P."/>
            <person name="Olinger L."/>
            <person name="Tatusov R.L."/>
            <person name="Zhao Q."/>
            <person name="Koonin E.V."/>
            <person name="Davis R.W."/>
        </authorList>
    </citation>
    <scope>NUCLEOTIDE SEQUENCE [LARGE SCALE GENOMIC DNA]</scope>
    <source>
        <strain>ATCC VR-885 / DSM 19411 / UW-3/Cx</strain>
    </source>
</reference>
<protein>
    <recommendedName>
        <fullName evidence="1">Ribonuclease 3</fullName>
        <ecNumber evidence="1">3.1.26.3</ecNumber>
    </recommendedName>
    <alternativeName>
        <fullName evidence="1">Ribonuclease III</fullName>
        <shortName evidence="1">RNase III</shortName>
    </alternativeName>
</protein>
<keyword id="KW-0963">Cytoplasm</keyword>
<keyword id="KW-0255">Endonuclease</keyword>
<keyword id="KW-0378">Hydrolase</keyword>
<keyword id="KW-0460">Magnesium</keyword>
<keyword id="KW-0479">Metal-binding</keyword>
<keyword id="KW-0507">mRNA processing</keyword>
<keyword id="KW-0540">Nuclease</keyword>
<keyword id="KW-1185">Reference proteome</keyword>
<keyword id="KW-0694">RNA-binding</keyword>
<keyword id="KW-0698">rRNA processing</keyword>
<keyword id="KW-0699">rRNA-binding</keyword>
<keyword id="KW-0819">tRNA processing</keyword>
<gene>
    <name evidence="1" type="primary">rnc</name>
    <name type="ordered locus">CT_297</name>
</gene>
<proteinExistence type="inferred from homology"/>
<accession>O84299</accession>
<dbReference type="EC" id="3.1.26.3" evidence="1"/>
<dbReference type="EMBL" id="AE001273">
    <property type="protein sequence ID" value="AAC67890.1"/>
    <property type="molecule type" value="Genomic_DNA"/>
</dbReference>
<dbReference type="PIR" id="C71532">
    <property type="entry name" value="C71532"/>
</dbReference>
<dbReference type="RefSeq" id="NP_219802.1">
    <property type="nucleotide sequence ID" value="NC_000117.1"/>
</dbReference>
<dbReference type="RefSeq" id="WP_009871645.1">
    <property type="nucleotide sequence ID" value="NC_000117.1"/>
</dbReference>
<dbReference type="SMR" id="O84299"/>
<dbReference type="FunCoup" id="O84299">
    <property type="interactions" value="222"/>
</dbReference>
<dbReference type="STRING" id="272561.CT_297"/>
<dbReference type="EnsemblBacteria" id="AAC67890">
    <property type="protein sequence ID" value="AAC67890"/>
    <property type="gene ID" value="CT_297"/>
</dbReference>
<dbReference type="GeneID" id="884827"/>
<dbReference type="KEGG" id="ctr:CT_297"/>
<dbReference type="PATRIC" id="fig|272561.5.peg.318"/>
<dbReference type="HOGENOM" id="CLU_000907_1_3_0"/>
<dbReference type="InParanoid" id="O84299"/>
<dbReference type="OrthoDB" id="9805026at2"/>
<dbReference type="Proteomes" id="UP000000431">
    <property type="component" value="Chromosome"/>
</dbReference>
<dbReference type="GO" id="GO:0005829">
    <property type="term" value="C:cytosol"/>
    <property type="evidence" value="ECO:0000318"/>
    <property type="project" value="GO_Central"/>
</dbReference>
<dbReference type="GO" id="GO:0003725">
    <property type="term" value="F:double-stranded RNA binding"/>
    <property type="evidence" value="ECO:0000318"/>
    <property type="project" value="GO_Central"/>
</dbReference>
<dbReference type="GO" id="GO:0046872">
    <property type="term" value="F:metal ion binding"/>
    <property type="evidence" value="ECO:0007669"/>
    <property type="project" value="UniProtKB-KW"/>
</dbReference>
<dbReference type="GO" id="GO:0004525">
    <property type="term" value="F:ribonuclease III activity"/>
    <property type="evidence" value="ECO:0000318"/>
    <property type="project" value="GO_Central"/>
</dbReference>
<dbReference type="GO" id="GO:0019843">
    <property type="term" value="F:rRNA binding"/>
    <property type="evidence" value="ECO:0007669"/>
    <property type="project" value="UniProtKB-KW"/>
</dbReference>
<dbReference type="GO" id="GO:0006397">
    <property type="term" value="P:mRNA processing"/>
    <property type="evidence" value="ECO:0007669"/>
    <property type="project" value="UniProtKB-UniRule"/>
</dbReference>
<dbReference type="GO" id="GO:0010468">
    <property type="term" value="P:regulation of gene expression"/>
    <property type="evidence" value="ECO:0000318"/>
    <property type="project" value="GO_Central"/>
</dbReference>
<dbReference type="GO" id="GO:0006396">
    <property type="term" value="P:RNA processing"/>
    <property type="evidence" value="ECO:0000318"/>
    <property type="project" value="GO_Central"/>
</dbReference>
<dbReference type="GO" id="GO:0006364">
    <property type="term" value="P:rRNA processing"/>
    <property type="evidence" value="ECO:0007669"/>
    <property type="project" value="UniProtKB-UniRule"/>
</dbReference>
<dbReference type="GO" id="GO:0008033">
    <property type="term" value="P:tRNA processing"/>
    <property type="evidence" value="ECO:0007669"/>
    <property type="project" value="UniProtKB-KW"/>
</dbReference>
<dbReference type="CDD" id="cd10845">
    <property type="entry name" value="DSRM_RNAse_III_family"/>
    <property type="match status" value="1"/>
</dbReference>
<dbReference type="CDD" id="cd00593">
    <property type="entry name" value="RIBOc"/>
    <property type="match status" value="1"/>
</dbReference>
<dbReference type="FunFam" id="1.10.1520.10:FF:000027">
    <property type="entry name" value="Ribonuclease 3"/>
    <property type="match status" value="1"/>
</dbReference>
<dbReference type="FunFam" id="3.30.160.20:FF:000083">
    <property type="entry name" value="Ribonuclease 3"/>
    <property type="match status" value="1"/>
</dbReference>
<dbReference type="Gene3D" id="3.30.160.20">
    <property type="match status" value="1"/>
</dbReference>
<dbReference type="Gene3D" id="1.10.1520.10">
    <property type="entry name" value="Ribonuclease III domain"/>
    <property type="match status" value="1"/>
</dbReference>
<dbReference type="HAMAP" id="MF_00104">
    <property type="entry name" value="RNase_III"/>
    <property type="match status" value="1"/>
</dbReference>
<dbReference type="InterPro" id="IPR014720">
    <property type="entry name" value="dsRBD_dom"/>
</dbReference>
<dbReference type="InterPro" id="IPR011907">
    <property type="entry name" value="RNase_III"/>
</dbReference>
<dbReference type="InterPro" id="IPR000999">
    <property type="entry name" value="RNase_III_dom"/>
</dbReference>
<dbReference type="InterPro" id="IPR036389">
    <property type="entry name" value="RNase_III_sf"/>
</dbReference>
<dbReference type="NCBIfam" id="TIGR02191">
    <property type="entry name" value="RNaseIII"/>
    <property type="match status" value="1"/>
</dbReference>
<dbReference type="PANTHER" id="PTHR11207:SF0">
    <property type="entry name" value="RIBONUCLEASE 3"/>
    <property type="match status" value="1"/>
</dbReference>
<dbReference type="PANTHER" id="PTHR11207">
    <property type="entry name" value="RIBONUCLEASE III"/>
    <property type="match status" value="1"/>
</dbReference>
<dbReference type="Pfam" id="PF00035">
    <property type="entry name" value="dsrm"/>
    <property type="match status" value="1"/>
</dbReference>
<dbReference type="Pfam" id="PF14622">
    <property type="entry name" value="Ribonucleas_3_3"/>
    <property type="match status" value="1"/>
</dbReference>
<dbReference type="SMART" id="SM00358">
    <property type="entry name" value="DSRM"/>
    <property type="match status" value="1"/>
</dbReference>
<dbReference type="SMART" id="SM00535">
    <property type="entry name" value="RIBOc"/>
    <property type="match status" value="1"/>
</dbReference>
<dbReference type="SUPFAM" id="SSF54768">
    <property type="entry name" value="dsRNA-binding domain-like"/>
    <property type="match status" value="1"/>
</dbReference>
<dbReference type="SUPFAM" id="SSF69065">
    <property type="entry name" value="RNase III domain-like"/>
    <property type="match status" value="1"/>
</dbReference>
<dbReference type="PROSITE" id="PS50137">
    <property type="entry name" value="DS_RBD"/>
    <property type="match status" value="1"/>
</dbReference>
<dbReference type="PROSITE" id="PS00517">
    <property type="entry name" value="RNASE_3_1"/>
    <property type="match status" value="1"/>
</dbReference>
<dbReference type="PROSITE" id="PS50142">
    <property type="entry name" value="RNASE_3_2"/>
    <property type="match status" value="1"/>
</dbReference>
<evidence type="ECO:0000255" key="1">
    <source>
        <dbReference type="HAMAP-Rule" id="MF_00104"/>
    </source>
</evidence>
<feature type="chain" id="PRO_0000180389" description="Ribonuclease 3">
    <location>
        <begin position="1"/>
        <end position="231"/>
    </location>
</feature>
<feature type="domain" description="RNase III" evidence="1">
    <location>
        <begin position="7"/>
        <end position="135"/>
    </location>
</feature>
<feature type="domain" description="DRBM" evidence="1">
    <location>
        <begin position="160"/>
        <end position="229"/>
    </location>
</feature>
<feature type="active site" evidence="1">
    <location>
        <position position="52"/>
    </location>
</feature>
<feature type="active site" evidence="1">
    <location>
        <position position="124"/>
    </location>
</feature>
<feature type="binding site" evidence="1">
    <location>
        <position position="48"/>
    </location>
    <ligand>
        <name>Mg(2+)</name>
        <dbReference type="ChEBI" id="CHEBI:18420"/>
    </ligand>
</feature>
<feature type="binding site" evidence="1">
    <location>
        <position position="121"/>
    </location>
    <ligand>
        <name>Mg(2+)</name>
        <dbReference type="ChEBI" id="CHEBI:18420"/>
    </ligand>
</feature>
<feature type="binding site" evidence="1">
    <location>
        <position position="124"/>
    </location>
    <ligand>
        <name>Mg(2+)</name>
        <dbReference type="ChEBI" id="CHEBI:18420"/>
    </ligand>
</feature>
<comment type="function">
    <text evidence="1">Digests double-stranded RNA. Involved in the processing of primary rRNA transcript to yield the immediate precursors to the large and small rRNAs (23S and 16S). Processes some mRNAs, and tRNAs when they are encoded in the rRNA operon. Processes pre-crRNA and tracrRNA of type II CRISPR loci if present in the organism.</text>
</comment>
<comment type="catalytic activity">
    <reaction evidence="1">
        <text>Endonucleolytic cleavage to 5'-phosphomonoester.</text>
        <dbReference type="EC" id="3.1.26.3"/>
    </reaction>
</comment>
<comment type="cofactor">
    <cofactor evidence="1">
        <name>Mg(2+)</name>
        <dbReference type="ChEBI" id="CHEBI:18420"/>
    </cofactor>
</comment>
<comment type="subunit">
    <text evidence="1">Homodimer.</text>
</comment>
<comment type="subcellular location">
    <subcellularLocation>
        <location evidence="1">Cytoplasm</location>
    </subcellularLocation>
</comment>
<comment type="similarity">
    <text evidence="1">Belongs to the ribonuclease III family.</text>
</comment>
<name>RNC_CHLTR</name>